<reference key="1">
    <citation type="submission" date="2007-02" db="EMBL/GenBank/DDBJ databases">
        <title>Complete sequence of Mycobacterium sp. JLS.</title>
        <authorList>
            <consortium name="US DOE Joint Genome Institute"/>
            <person name="Copeland A."/>
            <person name="Lucas S."/>
            <person name="Lapidus A."/>
            <person name="Barry K."/>
            <person name="Detter J.C."/>
            <person name="Glavina del Rio T."/>
            <person name="Hammon N."/>
            <person name="Israni S."/>
            <person name="Dalin E."/>
            <person name="Tice H."/>
            <person name="Pitluck S."/>
            <person name="Chain P."/>
            <person name="Malfatti S."/>
            <person name="Shin M."/>
            <person name="Vergez L."/>
            <person name="Schmutz J."/>
            <person name="Larimer F."/>
            <person name="Land M."/>
            <person name="Hauser L."/>
            <person name="Kyrpides N."/>
            <person name="Mikhailova N."/>
            <person name="Miller C.D."/>
            <person name="Anderson A.J."/>
            <person name="Sims R.C."/>
            <person name="Richardson P."/>
        </authorList>
    </citation>
    <scope>NUCLEOTIDE SEQUENCE [LARGE SCALE GENOMIC DNA]</scope>
    <source>
        <strain>JLS</strain>
    </source>
</reference>
<dbReference type="EC" id="3.1.21.10" evidence="1"/>
<dbReference type="EMBL" id="CP000580">
    <property type="protein sequence ID" value="ABN98090.1"/>
    <property type="status" value="ALT_INIT"/>
    <property type="molecule type" value="Genomic_DNA"/>
</dbReference>
<dbReference type="SMR" id="A3PYW3"/>
<dbReference type="KEGG" id="mjl:Mjls_2304"/>
<dbReference type="HOGENOM" id="CLU_091257_0_2_11"/>
<dbReference type="BioCyc" id="MSP164757:G1G8C-2323-MONOMER"/>
<dbReference type="GO" id="GO:0005737">
    <property type="term" value="C:cytoplasm"/>
    <property type="evidence" value="ECO:0007669"/>
    <property type="project" value="UniProtKB-SubCell"/>
</dbReference>
<dbReference type="GO" id="GO:0048476">
    <property type="term" value="C:Holliday junction resolvase complex"/>
    <property type="evidence" value="ECO:0007669"/>
    <property type="project" value="UniProtKB-UniRule"/>
</dbReference>
<dbReference type="GO" id="GO:0008821">
    <property type="term" value="F:crossover junction DNA endonuclease activity"/>
    <property type="evidence" value="ECO:0007669"/>
    <property type="project" value="UniProtKB-UniRule"/>
</dbReference>
<dbReference type="GO" id="GO:0003677">
    <property type="term" value="F:DNA binding"/>
    <property type="evidence" value="ECO:0007669"/>
    <property type="project" value="UniProtKB-KW"/>
</dbReference>
<dbReference type="GO" id="GO:0000287">
    <property type="term" value="F:magnesium ion binding"/>
    <property type="evidence" value="ECO:0007669"/>
    <property type="project" value="UniProtKB-UniRule"/>
</dbReference>
<dbReference type="GO" id="GO:0006310">
    <property type="term" value="P:DNA recombination"/>
    <property type="evidence" value="ECO:0007669"/>
    <property type="project" value="UniProtKB-UniRule"/>
</dbReference>
<dbReference type="GO" id="GO:0006281">
    <property type="term" value="P:DNA repair"/>
    <property type="evidence" value="ECO:0007669"/>
    <property type="project" value="UniProtKB-UniRule"/>
</dbReference>
<dbReference type="CDD" id="cd16962">
    <property type="entry name" value="RuvC"/>
    <property type="match status" value="1"/>
</dbReference>
<dbReference type="FunFam" id="3.30.420.10:FF:000002">
    <property type="entry name" value="Crossover junction endodeoxyribonuclease RuvC"/>
    <property type="match status" value="1"/>
</dbReference>
<dbReference type="Gene3D" id="3.30.420.10">
    <property type="entry name" value="Ribonuclease H-like superfamily/Ribonuclease H"/>
    <property type="match status" value="1"/>
</dbReference>
<dbReference type="HAMAP" id="MF_00034">
    <property type="entry name" value="RuvC"/>
    <property type="match status" value="1"/>
</dbReference>
<dbReference type="InterPro" id="IPR012337">
    <property type="entry name" value="RNaseH-like_sf"/>
</dbReference>
<dbReference type="InterPro" id="IPR036397">
    <property type="entry name" value="RNaseH_sf"/>
</dbReference>
<dbReference type="InterPro" id="IPR020563">
    <property type="entry name" value="X-over_junc_endoDNase_Mg_BS"/>
</dbReference>
<dbReference type="InterPro" id="IPR002176">
    <property type="entry name" value="X-over_junc_endoDNase_RuvC"/>
</dbReference>
<dbReference type="NCBIfam" id="NF000711">
    <property type="entry name" value="PRK00039.2-1"/>
    <property type="match status" value="1"/>
</dbReference>
<dbReference type="NCBIfam" id="TIGR00228">
    <property type="entry name" value="ruvC"/>
    <property type="match status" value="1"/>
</dbReference>
<dbReference type="PANTHER" id="PTHR30194">
    <property type="entry name" value="CROSSOVER JUNCTION ENDODEOXYRIBONUCLEASE RUVC"/>
    <property type="match status" value="1"/>
</dbReference>
<dbReference type="PANTHER" id="PTHR30194:SF3">
    <property type="entry name" value="CROSSOVER JUNCTION ENDODEOXYRIBONUCLEASE RUVC"/>
    <property type="match status" value="1"/>
</dbReference>
<dbReference type="Pfam" id="PF02075">
    <property type="entry name" value="RuvC"/>
    <property type="match status" value="1"/>
</dbReference>
<dbReference type="PRINTS" id="PR00696">
    <property type="entry name" value="RSOLVASERUVC"/>
</dbReference>
<dbReference type="SUPFAM" id="SSF53098">
    <property type="entry name" value="Ribonuclease H-like"/>
    <property type="match status" value="1"/>
</dbReference>
<dbReference type="PROSITE" id="PS01321">
    <property type="entry name" value="RUVC"/>
    <property type="match status" value="1"/>
</dbReference>
<keyword id="KW-0963">Cytoplasm</keyword>
<keyword id="KW-0227">DNA damage</keyword>
<keyword id="KW-0233">DNA recombination</keyword>
<keyword id="KW-0234">DNA repair</keyword>
<keyword id="KW-0238">DNA-binding</keyword>
<keyword id="KW-0255">Endonuclease</keyword>
<keyword id="KW-0378">Hydrolase</keyword>
<keyword id="KW-0460">Magnesium</keyword>
<keyword id="KW-0479">Metal-binding</keyword>
<keyword id="KW-0540">Nuclease</keyword>
<feature type="chain" id="PRO_0000332428" description="Crossover junction endodeoxyribonuclease RuvC">
    <location>
        <begin position="1"/>
        <end position="185"/>
    </location>
</feature>
<feature type="active site" evidence="1">
    <location>
        <position position="7"/>
    </location>
</feature>
<feature type="active site" evidence="1">
    <location>
        <position position="68"/>
    </location>
</feature>
<feature type="active site" evidence="1">
    <location>
        <position position="141"/>
    </location>
</feature>
<feature type="binding site" evidence="1">
    <location>
        <position position="7"/>
    </location>
    <ligand>
        <name>Mg(2+)</name>
        <dbReference type="ChEBI" id="CHEBI:18420"/>
        <label>1</label>
    </ligand>
</feature>
<feature type="binding site" evidence="1">
    <location>
        <position position="68"/>
    </location>
    <ligand>
        <name>Mg(2+)</name>
        <dbReference type="ChEBI" id="CHEBI:18420"/>
        <label>2</label>
    </ligand>
</feature>
<feature type="binding site" evidence="1">
    <location>
        <position position="141"/>
    </location>
    <ligand>
        <name>Mg(2+)</name>
        <dbReference type="ChEBI" id="CHEBI:18420"/>
        <label>1</label>
    </ligand>
</feature>
<evidence type="ECO:0000255" key="1">
    <source>
        <dbReference type="HAMAP-Rule" id="MF_00034"/>
    </source>
</evidence>
<evidence type="ECO:0000305" key="2"/>
<gene>
    <name evidence="1" type="primary">ruvC</name>
    <name type="ordered locus">Mjls_2304</name>
</gene>
<organism>
    <name type="scientific">Mycobacterium sp. (strain JLS)</name>
    <dbReference type="NCBI Taxonomy" id="164757"/>
    <lineage>
        <taxon>Bacteria</taxon>
        <taxon>Bacillati</taxon>
        <taxon>Actinomycetota</taxon>
        <taxon>Actinomycetes</taxon>
        <taxon>Mycobacteriales</taxon>
        <taxon>Mycobacteriaceae</taxon>
        <taxon>Mycobacterium</taxon>
    </lineage>
</organism>
<accession>A3PYW3</accession>
<comment type="function">
    <text evidence="1">The RuvA-RuvB-RuvC complex processes Holliday junction (HJ) DNA during genetic recombination and DNA repair. Endonuclease that resolves HJ intermediates. Cleaves cruciform DNA by making single-stranded nicks across the HJ at symmetrical positions within the homologous arms, yielding a 5'-phosphate and a 3'-hydroxyl group; requires a central core of homology in the junction. The consensus cleavage sequence is 5'-(A/T)TT(C/G)-3'. Cleavage occurs on the 3'-side of the TT dinucleotide at the point of strand exchange. HJ branch migration catalyzed by RuvA-RuvB allows RuvC to scan DNA until it finds its consensus sequence, where it cleaves and resolves the cruciform DNA.</text>
</comment>
<comment type="catalytic activity">
    <reaction evidence="1">
        <text>Endonucleolytic cleavage at a junction such as a reciprocal single-stranded crossover between two homologous DNA duplexes (Holliday junction).</text>
        <dbReference type="EC" id="3.1.21.10"/>
    </reaction>
</comment>
<comment type="cofactor">
    <cofactor evidence="1">
        <name>Mg(2+)</name>
        <dbReference type="ChEBI" id="CHEBI:18420"/>
    </cofactor>
    <text evidence="1">Binds 2 Mg(2+) ion per subunit.</text>
</comment>
<comment type="subunit">
    <text evidence="1">Homodimer which binds Holliday junction (HJ) DNA. The HJ becomes 2-fold symmetrical on binding to RuvC with unstacked arms; it has a different conformation from HJ DNA in complex with RuvA. In the full resolvosome a probable DNA-RuvA(4)-RuvB(12)-RuvC(2) complex forms which resolves the HJ.</text>
</comment>
<comment type="subcellular location">
    <subcellularLocation>
        <location evidence="1">Cytoplasm</location>
    </subcellularLocation>
</comment>
<comment type="similarity">
    <text evidence="1">Belongs to the RuvC family.</text>
</comment>
<comment type="sequence caution" evidence="2">
    <conflict type="erroneous initiation">
        <sequence resource="EMBL-CDS" id="ABN98090"/>
    </conflict>
    <text>Extended N-terminus.</text>
</comment>
<protein>
    <recommendedName>
        <fullName evidence="1">Crossover junction endodeoxyribonuclease RuvC</fullName>
        <ecNumber evidence="1">3.1.21.10</ecNumber>
    </recommendedName>
    <alternativeName>
        <fullName evidence="1">Holliday junction nuclease RuvC</fullName>
    </alternativeName>
    <alternativeName>
        <fullName evidence="1">Holliday junction resolvase RuvC</fullName>
    </alternativeName>
</protein>
<name>RUVC_MYCSJ</name>
<proteinExistence type="inferred from homology"/>
<sequence length="185" mass="19860">MRVMGVDPGLTRCGLSVIESGQGRKVIALDVDVVRTPADEQLHRRLLIISDTVEHWMDTHRPDVIAIERVFANHNANTAMGTAQAGGVIALAAAKRDIDVHFHTPSEVKAAVTGNGRADKAQVTEMVTRILALQAKPTPADAADALALAICHCWRAPMIARMAAAEAMAAEARRKYQAKLKAARA</sequence>